<keyword id="KW-0903">Direct protein sequencing</keyword>
<keyword id="KW-0520">NAD</keyword>
<keyword id="KW-0560">Oxidoreductase</keyword>
<keyword id="KW-0585">Phenylalanine catabolism</keyword>
<keyword id="KW-0823">Tryptophan catabolism</keyword>
<keyword id="KW-0828">Tyrosine catabolism</keyword>
<reference key="1">
    <citation type="submission" date="2011-08" db="EMBL/GenBank/DDBJ databases">
        <title>Whole genome shotgun sequencing of Clostridium 'sporogenes'.</title>
        <authorList>
            <person name="Bradbury M."/>
            <person name="Greenfield P."/>
            <person name="Midgley D."/>
            <person name="Li D."/>
            <person name="Tran-Dinh N."/>
            <person name="Brown J."/>
        </authorList>
    </citation>
    <scope>NUCLEOTIDE SEQUENCE [LARGE SCALE GENOMIC DNA]</scope>
    <source>
        <strain>ATCC 7955 / DSM 767 / NBRC 16411 / NCIMB 8053 / NCTC 8594 / PA 3679</strain>
    </source>
</reference>
<reference key="2">
    <citation type="journal article" date="2000" name="Eur. J. Biochem.">
        <title>The involvement of coenzyme A esters in the dehydration of (R)-phenyllactate to (E)-cinnamate by Clostridium sporogenes.</title>
        <authorList>
            <person name="Dickert S."/>
            <person name="Pierik A.J."/>
            <person name="Linder D."/>
            <person name="Buckel W."/>
        </authorList>
    </citation>
    <scope>PROTEIN SEQUENCE OF 1-29</scope>
    <scope>FUNCTION IN PHENYLALANINE FERMENTATION</scope>
    <scope>CATALYTIC ACTIVITY</scope>
    <scope>BIOPHYSICOCHEMICAL PROPERTIES</scope>
    <scope>PATHWAY</scope>
    <source>
        <strain>ATCC 3584</strain>
    </source>
</reference>
<organism>
    <name type="scientific">Clostridium sporogenes (strain ATCC 7955 / DSM 767 / NBRC 16411 / NCIMB 8053 / NCTC 8594 / PA 3679)</name>
    <dbReference type="NCBI Taxonomy" id="1075091"/>
    <lineage>
        <taxon>Bacteria</taxon>
        <taxon>Bacillati</taxon>
        <taxon>Bacillota</taxon>
        <taxon>Clostridia</taxon>
        <taxon>Eubacteriales</taxon>
        <taxon>Clostridiaceae</taxon>
        <taxon>Clostridium</taxon>
    </lineage>
</organism>
<comment type="function">
    <text evidence="1 3">Essential for the reductive metabolism of L-phenylalanine, L-tyrosine and L-tryptophan (By similarity). Catalyzes the conversion of phenylpyruvic acid to phenyllactic acid, 4-hydroxy-phenylpyruvic acid to 4-hydroxy-phenyllactic acid, and indolepyruvic acid to indolelactic acid (By similarity) (PubMed:10849007).</text>
</comment>
<comment type="catalytic activity">
    <reaction evidence="3">
        <text>(R)-3-phenyllactate + NAD(+) = 3-phenylpyruvate + NADH + H(+)</text>
        <dbReference type="Rhea" id="RHEA:38351"/>
        <dbReference type="ChEBI" id="CHEBI:11009"/>
        <dbReference type="ChEBI" id="CHEBI:15378"/>
        <dbReference type="ChEBI" id="CHEBI:18005"/>
        <dbReference type="ChEBI" id="CHEBI:57540"/>
        <dbReference type="ChEBI" id="CHEBI:57945"/>
        <dbReference type="EC" id="1.1.1.110"/>
    </reaction>
    <physiologicalReaction direction="right-to-left" evidence="3">
        <dbReference type="Rhea" id="RHEA:38353"/>
    </physiologicalReaction>
</comment>
<comment type="catalytic activity">
    <reaction evidence="1">
        <text>(2R)-2-hydroxy-3-(4-hydroxyphenyl)propanoate + NAD(+) = 3-(4-hydroxyphenyl)pyruvate + NADH + H(+)</text>
        <dbReference type="Rhea" id="RHEA:10780"/>
        <dbReference type="ChEBI" id="CHEBI:10980"/>
        <dbReference type="ChEBI" id="CHEBI:15378"/>
        <dbReference type="ChEBI" id="CHEBI:36242"/>
        <dbReference type="ChEBI" id="CHEBI:57540"/>
        <dbReference type="ChEBI" id="CHEBI:57945"/>
        <dbReference type="EC" id="1.1.1.110"/>
    </reaction>
    <physiologicalReaction direction="right-to-left" evidence="1">
        <dbReference type="Rhea" id="RHEA:10782"/>
    </physiologicalReaction>
</comment>
<comment type="catalytic activity">
    <reaction evidence="1">
        <text>3-(indol-3-yl)lactate + NAD(+) = indole-3-pyruvate + NADH + H(+)</text>
        <dbReference type="Rhea" id="RHEA:20133"/>
        <dbReference type="ChEBI" id="CHEBI:15378"/>
        <dbReference type="ChEBI" id="CHEBI:17282"/>
        <dbReference type="ChEBI" id="CHEBI:17640"/>
        <dbReference type="ChEBI" id="CHEBI:57540"/>
        <dbReference type="ChEBI" id="CHEBI:57945"/>
        <dbReference type="EC" id="1.1.1.110"/>
    </reaction>
    <physiologicalReaction direction="right-to-left" evidence="1">
        <dbReference type="Rhea" id="RHEA:20135"/>
    </physiologicalReaction>
</comment>
<comment type="biophysicochemical properties">
    <kinetics>
        <KM evidence="3">20 uM for phenylpyruvate</KM>
        <KM evidence="3">10 uM for NADH</KM>
    </kinetics>
    <phDependence>
        <text evidence="3">Optimum pH is 8.</text>
    </phDependence>
</comment>
<comment type="pathway">
    <text evidence="6">Amino-acid degradation.</text>
</comment>
<comment type="similarity">
    <text evidence="5">Belongs to the D-isomer specific 2-hydroxyacid dehydrogenase family.</text>
</comment>
<name>FLDH_CLOS3</name>
<sequence>MKILAYCVRPDEIDSFKNFSEKYGHTVDLIPDSFGPSVAHLAKGYDGISILGNDTCNREALEKIKDCGIKYLATRTAGVNNIDFDAAKEFGINVANVPAYSPNSVSEFTVGLALSLTRKIPFALKRVELNNFALGGLIGVELRNLTLGVIGTGRIGLKVIEGFSGFGMKKMIGYDIFENEKAKEYIEYKSLDEVYKEADIITLHAPLTDDNYHMIGKESIAKMKDGVFIINAARGALIDSEALIEGLKSGKIAGAALDSYEYEQGVFHNNKMNEIMKDDTLARLKSFPNVVITPHLGFYTDEAVSNMVEITLMNLQEFELKGTCKNQRVCK</sequence>
<evidence type="ECO:0000250" key="1">
    <source>
        <dbReference type="UniProtKB" id="J7SHB8"/>
    </source>
</evidence>
<evidence type="ECO:0000250" key="2">
    <source>
        <dbReference type="UniProtKB" id="P26297"/>
    </source>
</evidence>
<evidence type="ECO:0000269" key="3">
    <source>
    </source>
</evidence>
<evidence type="ECO:0000303" key="4">
    <source>
    </source>
</evidence>
<evidence type="ECO:0000305" key="5"/>
<evidence type="ECO:0000305" key="6">
    <source>
    </source>
</evidence>
<gene>
    <name evidence="4" type="primary">fldH</name>
    <name type="ORF">IYC_08803</name>
</gene>
<protein>
    <recommendedName>
        <fullName evidence="5">Aromatic 2-oxoacid reductase</fullName>
        <ecNumber evidence="1 3">1.1.1.110</ecNumber>
    </recommendedName>
    <alternativeName>
        <fullName evidence="4">Phenyllactate dehydrogenase</fullName>
    </alternativeName>
</protein>
<accession>G9EZR6</accession>
<feature type="chain" id="PRO_0000423007" description="Aromatic 2-oxoacid reductase">
    <location>
        <begin position="1"/>
        <end position="331"/>
    </location>
</feature>
<feature type="active site" evidence="2">
    <location>
        <position position="234"/>
    </location>
</feature>
<feature type="active site" evidence="2">
    <location>
        <position position="263"/>
    </location>
</feature>
<feature type="active site" description="Proton donor" evidence="2">
    <location>
        <position position="295"/>
    </location>
</feature>
<feature type="binding site" evidence="2">
    <location>
        <begin position="154"/>
        <end position="155"/>
    </location>
    <ligand>
        <name>NAD(+)</name>
        <dbReference type="ChEBI" id="CHEBI:57540"/>
    </ligand>
</feature>
<feature type="binding site" evidence="2">
    <location>
        <position position="175"/>
    </location>
    <ligand>
        <name>NAD(+)</name>
        <dbReference type="ChEBI" id="CHEBI:57540"/>
    </ligand>
</feature>
<feature type="binding site" evidence="2">
    <location>
        <begin position="205"/>
        <end position="206"/>
    </location>
    <ligand>
        <name>NAD(+)</name>
        <dbReference type="ChEBI" id="CHEBI:57540"/>
    </ligand>
</feature>
<feature type="binding site" evidence="2">
    <location>
        <position position="211"/>
    </location>
    <ligand>
        <name>NAD(+)</name>
        <dbReference type="ChEBI" id="CHEBI:57540"/>
    </ligand>
</feature>
<feature type="binding site" evidence="2">
    <location>
        <begin position="232"/>
        <end position="234"/>
    </location>
    <ligand>
        <name>NAD(+)</name>
        <dbReference type="ChEBI" id="CHEBI:57540"/>
    </ligand>
</feature>
<feature type="binding site" evidence="2">
    <location>
        <position position="258"/>
    </location>
    <ligand>
        <name>NAD(+)</name>
        <dbReference type="ChEBI" id="CHEBI:57540"/>
    </ligand>
</feature>
<dbReference type="EC" id="1.1.1.110" evidence="1 3"/>
<dbReference type="EMBL" id="JH470519">
    <property type="protein sequence ID" value="EHN15453.1"/>
    <property type="molecule type" value="Genomic_DNA"/>
</dbReference>
<dbReference type="RefSeq" id="WP_003492363.1">
    <property type="nucleotide sequence ID" value="NZ_JH470519.1"/>
</dbReference>
<dbReference type="SMR" id="G9EZR6"/>
<dbReference type="HOGENOM" id="CLU_019796_1_1_9"/>
<dbReference type="BioCyc" id="MetaCyc:MONOMER-8131"/>
<dbReference type="SABIO-RK" id="G9EZR6"/>
<dbReference type="GO" id="GO:0008720">
    <property type="term" value="F:D-lactate dehydrogenase activity"/>
    <property type="evidence" value="ECO:0007669"/>
    <property type="project" value="TreeGrafter"/>
</dbReference>
<dbReference type="GO" id="GO:0047995">
    <property type="term" value="F:hydroxyphenylpyruvate reductase activity"/>
    <property type="evidence" value="ECO:0007669"/>
    <property type="project" value="RHEA"/>
</dbReference>
<dbReference type="GO" id="GO:0047722">
    <property type="term" value="F:indolelactate dehydrogenase (NAD+) activity"/>
    <property type="evidence" value="ECO:0007669"/>
    <property type="project" value="RHEA"/>
</dbReference>
<dbReference type="GO" id="GO:0051287">
    <property type="term" value="F:NAD binding"/>
    <property type="evidence" value="ECO:0007669"/>
    <property type="project" value="InterPro"/>
</dbReference>
<dbReference type="GO" id="GO:0097256">
    <property type="term" value="F:phenyllactate dehydrogenase (NAD+) activity"/>
    <property type="evidence" value="ECO:0000314"/>
    <property type="project" value="UniProtKB"/>
</dbReference>
<dbReference type="GO" id="GO:0006559">
    <property type="term" value="P:L-phenylalanine catabolic process"/>
    <property type="evidence" value="ECO:0000314"/>
    <property type="project" value="UniProtKB"/>
</dbReference>
<dbReference type="GO" id="GO:0006569">
    <property type="term" value="P:L-tryptophan catabolic process"/>
    <property type="evidence" value="ECO:0007669"/>
    <property type="project" value="UniProtKB-KW"/>
</dbReference>
<dbReference type="GO" id="GO:0006572">
    <property type="term" value="P:tyrosine catabolic process"/>
    <property type="evidence" value="ECO:0007669"/>
    <property type="project" value="UniProtKB-KW"/>
</dbReference>
<dbReference type="CDD" id="cd12185">
    <property type="entry name" value="HGDH_LDH_like"/>
    <property type="match status" value="1"/>
</dbReference>
<dbReference type="Gene3D" id="3.40.50.720">
    <property type="entry name" value="NAD(P)-binding Rossmann-like Domain"/>
    <property type="match status" value="2"/>
</dbReference>
<dbReference type="InterPro" id="IPR006139">
    <property type="entry name" value="D-isomer_2_OHA_DH_cat_dom"/>
</dbReference>
<dbReference type="InterPro" id="IPR029753">
    <property type="entry name" value="D-isomer_DH_CS"/>
</dbReference>
<dbReference type="InterPro" id="IPR029752">
    <property type="entry name" value="D-isomer_DH_CS1"/>
</dbReference>
<dbReference type="InterPro" id="IPR006140">
    <property type="entry name" value="D-isomer_DH_NAD-bd"/>
</dbReference>
<dbReference type="InterPro" id="IPR036291">
    <property type="entry name" value="NAD(P)-bd_dom_sf"/>
</dbReference>
<dbReference type="PANTHER" id="PTHR43026">
    <property type="entry name" value="2-HYDROXYACID DEHYDROGENASE HOMOLOG 1-RELATED"/>
    <property type="match status" value="1"/>
</dbReference>
<dbReference type="PANTHER" id="PTHR43026:SF1">
    <property type="entry name" value="2-HYDROXYACID DEHYDROGENASE HOMOLOG 1-RELATED"/>
    <property type="match status" value="1"/>
</dbReference>
<dbReference type="Pfam" id="PF00389">
    <property type="entry name" value="2-Hacid_dh"/>
    <property type="match status" value="1"/>
</dbReference>
<dbReference type="Pfam" id="PF02826">
    <property type="entry name" value="2-Hacid_dh_C"/>
    <property type="match status" value="1"/>
</dbReference>
<dbReference type="SUPFAM" id="SSF52283">
    <property type="entry name" value="Formate/glycerate dehydrogenase catalytic domain-like"/>
    <property type="match status" value="1"/>
</dbReference>
<dbReference type="SUPFAM" id="SSF51735">
    <property type="entry name" value="NAD(P)-binding Rossmann-fold domains"/>
    <property type="match status" value="1"/>
</dbReference>
<dbReference type="PROSITE" id="PS00065">
    <property type="entry name" value="D_2_HYDROXYACID_DH_1"/>
    <property type="match status" value="1"/>
</dbReference>
<dbReference type="PROSITE" id="PS00670">
    <property type="entry name" value="D_2_HYDROXYACID_DH_2"/>
    <property type="match status" value="1"/>
</dbReference>
<dbReference type="PROSITE" id="PS00671">
    <property type="entry name" value="D_2_HYDROXYACID_DH_3"/>
    <property type="match status" value="1"/>
</dbReference>
<proteinExistence type="evidence at protein level"/>